<gene>
    <name evidence="1" type="primary">rpsJ</name>
    <name evidence="1" type="synonym">rps10</name>
    <name type="ordered locus">PCC7424_0048</name>
</gene>
<feature type="chain" id="PRO_1000127111" description="Small ribosomal subunit protein uS10">
    <location>
        <begin position="1"/>
        <end position="105"/>
    </location>
</feature>
<name>RS10_GLOC7</name>
<evidence type="ECO:0000255" key="1">
    <source>
        <dbReference type="HAMAP-Rule" id="MF_00508"/>
    </source>
</evidence>
<evidence type="ECO:0000305" key="2"/>
<organism>
    <name type="scientific">Gloeothece citriformis (strain PCC 7424)</name>
    <name type="common">Cyanothece sp. (strain PCC 7424)</name>
    <dbReference type="NCBI Taxonomy" id="65393"/>
    <lineage>
        <taxon>Bacteria</taxon>
        <taxon>Bacillati</taxon>
        <taxon>Cyanobacteriota</taxon>
        <taxon>Cyanophyceae</taxon>
        <taxon>Oscillatoriophycideae</taxon>
        <taxon>Chroococcales</taxon>
        <taxon>Aphanothecaceae</taxon>
        <taxon>Gloeothece</taxon>
        <taxon>Gloeothece citriformis</taxon>
    </lineage>
</organism>
<proteinExistence type="inferred from homology"/>
<dbReference type="EMBL" id="CP001291">
    <property type="protein sequence ID" value="ACK68521.1"/>
    <property type="molecule type" value="Genomic_DNA"/>
</dbReference>
<dbReference type="RefSeq" id="WP_012597472.1">
    <property type="nucleotide sequence ID" value="NC_011729.1"/>
</dbReference>
<dbReference type="SMR" id="B7K833"/>
<dbReference type="STRING" id="65393.PCC7424_0048"/>
<dbReference type="KEGG" id="cyc:PCC7424_0048"/>
<dbReference type="eggNOG" id="COG0051">
    <property type="taxonomic scope" value="Bacteria"/>
</dbReference>
<dbReference type="HOGENOM" id="CLU_122625_1_3_3"/>
<dbReference type="OrthoDB" id="9804464at2"/>
<dbReference type="Proteomes" id="UP000002384">
    <property type="component" value="Chromosome"/>
</dbReference>
<dbReference type="GO" id="GO:1990904">
    <property type="term" value="C:ribonucleoprotein complex"/>
    <property type="evidence" value="ECO:0007669"/>
    <property type="project" value="UniProtKB-KW"/>
</dbReference>
<dbReference type="GO" id="GO:0005840">
    <property type="term" value="C:ribosome"/>
    <property type="evidence" value="ECO:0007669"/>
    <property type="project" value="UniProtKB-KW"/>
</dbReference>
<dbReference type="GO" id="GO:0003735">
    <property type="term" value="F:structural constituent of ribosome"/>
    <property type="evidence" value="ECO:0007669"/>
    <property type="project" value="InterPro"/>
</dbReference>
<dbReference type="GO" id="GO:0000049">
    <property type="term" value="F:tRNA binding"/>
    <property type="evidence" value="ECO:0007669"/>
    <property type="project" value="UniProtKB-UniRule"/>
</dbReference>
<dbReference type="GO" id="GO:0006412">
    <property type="term" value="P:translation"/>
    <property type="evidence" value="ECO:0007669"/>
    <property type="project" value="UniProtKB-UniRule"/>
</dbReference>
<dbReference type="FunFam" id="3.30.70.600:FF:000001">
    <property type="entry name" value="30S ribosomal protein S10"/>
    <property type="match status" value="1"/>
</dbReference>
<dbReference type="Gene3D" id="3.30.70.600">
    <property type="entry name" value="Ribosomal protein S10 domain"/>
    <property type="match status" value="1"/>
</dbReference>
<dbReference type="HAMAP" id="MF_00508">
    <property type="entry name" value="Ribosomal_uS10"/>
    <property type="match status" value="1"/>
</dbReference>
<dbReference type="InterPro" id="IPR001848">
    <property type="entry name" value="Ribosomal_uS10"/>
</dbReference>
<dbReference type="InterPro" id="IPR018268">
    <property type="entry name" value="Ribosomal_uS10_CS"/>
</dbReference>
<dbReference type="InterPro" id="IPR027486">
    <property type="entry name" value="Ribosomal_uS10_dom"/>
</dbReference>
<dbReference type="InterPro" id="IPR036838">
    <property type="entry name" value="Ribosomal_uS10_dom_sf"/>
</dbReference>
<dbReference type="NCBIfam" id="NF001861">
    <property type="entry name" value="PRK00596.1"/>
    <property type="match status" value="1"/>
</dbReference>
<dbReference type="NCBIfam" id="TIGR01049">
    <property type="entry name" value="rpsJ_bact"/>
    <property type="match status" value="1"/>
</dbReference>
<dbReference type="PANTHER" id="PTHR11700">
    <property type="entry name" value="30S RIBOSOMAL PROTEIN S10 FAMILY MEMBER"/>
    <property type="match status" value="1"/>
</dbReference>
<dbReference type="Pfam" id="PF00338">
    <property type="entry name" value="Ribosomal_S10"/>
    <property type="match status" value="1"/>
</dbReference>
<dbReference type="PRINTS" id="PR00971">
    <property type="entry name" value="RIBOSOMALS10"/>
</dbReference>
<dbReference type="SMART" id="SM01403">
    <property type="entry name" value="Ribosomal_S10"/>
    <property type="match status" value="1"/>
</dbReference>
<dbReference type="SUPFAM" id="SSF54999">
    <property type="entry name" value="Ribosomal protein S10"/>
    <property type="match status" value="1"/>
</dbReference>
<dbReference type="PROSITE" id="PS00361">
    <property type="entry name" value="RIBOSOMAL_S10"/>
    <property type="match status" value="1"/>
</dbReference>
<protein>
    <recommendedName>
        <fullName evidence="1">Small ribosomal subunit protein uS10</fullName>
    </recommendedName>
    <alternativeName>
        <fullName evidence="2">30S ribosomal protein S10</fullName>
    </alternativeName>
</protein>
<reference key="1">
    <citation type="journal article" date="2011" name="MBio">
        <title>Novel metabolic attributes of the genus Cyanothece, comprising a group of unicellular nitrogen-fixing Cyanobacteria.</title>
        <authorList>
            <person name="Bandyopadhyay A."/>
            <person name="Elvitigala T."/>
            <person name="Welsh E."/>
            <person name="Stockel J."/>
            <person name="Liberton M."/>
            <person name="Min H."/>
            <person name="Sherman L.A."/>
            <person name="Pakrasi H.B."/>
        </authorList>
    </citation>
    <scope>NUCLEOTIDE SEQUENCE [LARGE SCALE GENOMIC DNA]</scope>
    <source>
        <strain>PCC 7424</strain>
    </source>
</reference>
<accession>B7K833</accession>
<sequence length="105" mass="12109">MATLQQQKIRIRLKAFDRRLLDTSCEKIVDTANRTNATAIGPIPLPTKRRVYCVLRSPHVDKDSREHFETRTHRRIIDIYQPSSKTIDALMKLDLPAGVDIEVKL</sequence>
<keyword id="KW-1185">Reference proteome</keyword>
<keyword id="KW-0687">Ribonucleoprotein</keyword>
<keyword id="KW-0689">Ribosomal protein</keyword>
<comment type="function">
    <text evidence="1">Involved in the binding of tRNA to the ribosomes.</text>
</comment>
<comment type="subunit">
    <text evidence="1">Part of the 30S ribosomal subunit.</text>
</comment>
<comment type="similarity">
    <text evidence="1">Belongs to the universal ribosomal protein uS10 family.</text>
</comment>